<accession>A4QLS3</accession>
<reference key="1">
    <citation type="submission" date="2007-03" db="EMBL/GenBank/DDBJ databases">
        <title>Sequencing analysis of Nasturtium officinale chloroplast DNA.</title>
        <authorList>
            <person name="Hosouchi T."/>
            <person name="Tsuruoka H."/>
            <person name="Kotani H."/>
        </authorList>
    </citation>
    <scope>NUCLEOTIDE SEQUENCE [LARGE SCALE GENOMIC DNA]</scope>
</reference>
<gene>
    <name evidence="1" type="primary">rpoC2</name>
</gene>
<protein>
    <recommendedName>
        <fullName evidence="1">DNA-directed RNA polymerase subunit beta''</fullName>
        <ecNumber evidence="1">2.7.7.6</ecNumber>
    </recommendedName>
    <alternativeName>
        <fullName evidence="1">PEP</fullName>
    </alternativeName>
    <alternativeName>
        <fullName evidence="1">Plastid-encoded RNA polymerase subunit beta''</fullName>
        <shortName evidence="1">RNA polymerase subunit beta''</shortName>
    </alternativeName>
</protein>
<comment type="function">
    <text evidence="1">DNA-dependent RNA polymerase catalyzes the transcription of DNA into RNA using the four ribonucleoside triphosphates as substrates.</text>
</comment>
<comment type="catalytic activity">
    <reaction evidence="1">
        <text>RNA(n) + a ribonucleoside 5'-triphosphate = RNA(n+1) + diphosphate</text>
        <dbReference type="Rhea" id="RHEA:21248"/>
        <dbReference type="Rhea" id="RHEA-COMP:14527"/>
        <dbReference type="Rhea" id="RHEA-COMP:17342"/>
        <dbReference type="ChEBI" id="CHEBI:33019"/>
        <dbReference type="ChEBI" id="CHEBI:61557"/>
        <dbReference type="ChEBI" id="CHEBI:140395"/>
        <dbReference type="EC" id="2.7.7.6"/>
    </reaction>
</comment>
<comment type="cofactor">
    <cofactor evidence="1">
        <name>Zn(2+)</name>
        <dbReference type="ChEBI" id="CHEBI:29105"/>
    </cofactor>
    <text evidence="1">Binds 1 Zn(2+) ion per subunit.</text>
</comment>
<comment type="subunit">
    <text evidence="1">In plastids the minimal PEP RNA polymerase catalytic core is composed of four subunits: alpha, beta, beta', and beta''. When a (nuclear-encoded) sigma factor is associated with the core the holoenzyme is formed, which can initiate transcription.</text>
</comment>
<comment type="subcellular location">
    <subcellularLocation>
        <location evidence="1">Plastid</location>
        <location evidence="1">Chloroplast</location>
    </subcellularLocation>
</comment>
<comment type="similarity">
    <text evidence="1">Belongs to the RNA polymerase beta' chain family. RpoC2 subfamily.</text>
</comment>
<organism>
    <name type="scientific">Nasturtium officinale</name>
    <name type="common">Watercress</name>
    <name type="synonym">Rorippa nasturtium-aquaticum</name>
    <dbReference type="NCBI Taxonomy" id="65948"/>
    <lineage>
        <taxon>Eukaryota</taxon>
        <taxon>Viridiplantae</taxon>
        <taxon>Streptophyta</taxon>
        <taxon>Embryophyta</taxon>
        <taxon>Tracheophyta</taxon>
        <taxon>Spermatophyta</taxon>
        <taxon>Magnoliopsida</taxon>
        <taxon>eudicotyledons</taxon>
        <taxon>Gunneridae</taxon>
        <taxon>Pentapetalae</taxon>
        <taxon>rosids</taxon>
        <taxon>malvids</taxon>
        <taxon>Brassicales</taxon>
        <taxon>Brassicaceae</taxon>
        <taxon>Cardamineae</taxon>
        <taxon>Nasturtium</taxon>
    </lineage>
</organism>
<proteinExistence type="inferred from homology"/>
<geneLocation type="chloroplast"/>
<keyword id="KW-0150">Chloroplast</keyword>
<keyword id="KW-0240">DNA-directed RNA polymerase</keyword>
<keyword id="KW-0479">Metal-binding</keyword>
<keyword id="KW-0548">Nucleotidyltransferase</keyword>
<keyword id="KW-0934">Plastid</keyword>
<keyword id="KW-0804">Transcription</keyword>
<keyword id="KW-0808">Transferase</keyword>
<keyword id="KW-0862">Zinc</keyword>
<dbReference type="EC" id="2.7.7.6" evidence="1"/>
<dbReference type="EMBL" id="AP009376">
    <property type="protein sequence ID" value="BAF50628.1"/>
    <property type="molecule type" value="Genomic_DNA"/>
</dbReference>
<dbReference type="RefSeq" id="YP_001123804.1">
    <property type="nucleotide sequence ID" value="NC_009275.1"/>
</dbReference>
<dbReference type="SMR" id="A4QLS3"/>
<dbReference type="GeneID" id="4962189"/>
<dbReference type="GO" id="GO:0009507">
    <property type="term" value="C:chloroplast"/>
    <property type="evidence" value="ECO:0007669"/>
    <property type="project" value="UniProtKB-SubCell"/>
</dbReference>
<dbReference type="GO" id="GO:0000428">
    <property type="term" value="C:DNA-directed RNA polymerase complex"/>
    <property type="evidence" value="ECO:0007669"/>
    <property type="project" value="UniProtKB-KW"/>
</dbReference>
<dbReference type="GO" id="GO:0005739">
    <property type="term" value="C:mitochondrion"/>
    <property type="evidence" value="ECO:0007669"/>
    <property type="project" value="GOC"/>
</dbReference>
<dbReference type="GO" id="GO:0003677">
    <property type="term" value="F:DNA binding"/>
    <property type="evidence" value="ECO:0007669"/>
    <property type="project" value="UniProtKB-UniRule"/>
</dbReference>
<dbReference type="GO" id="GO:0003899">
    <property type="term" value="F:DNA-directed RNA polymerase activity"/>
    <property type="evidence" value="ECO:0007669"/>
    <property type="project" value="UniProtKB-UniRule"/>
</dbReference>
<dbReference type="GO" id="GO:0008270">
    <property type="term" value="F:zinc ion binding"/>
    <property type="evidence" value="ECO:0007669"/>
    <property type="project" value="UniProtKB-UniRule"/>
</dbReference>
<dbReference type="GO" id="GO:0006351">
    <property type="term" value="P:DNA-templated transcription"/>
    <property type="evidence" value="ECO:0007669"/>
    <property type="project" value="UniProtKB-UniRule"/>
</dbReference>
<dbReference type="CDD" id="cd02655">
    <property type="entry name" value="RNAP_beta'_C"/>
    <property type="match status" value="1"/>
</dbReference>
<dbReference type="FunFam" id="1.10.132.30:FF:000002">
    <property type="entry name" value="DNA-directed RNA polymerase subunit beta"/>
    <property type="match status" value="1"/>
</dbReference>
<dbReference type="FunFam" id="1.10.1790.20:FF:000002">
    <property type="entry name" value="DNA-directed RNA polymerase subunit beta"/>
    <property type="match status" value="1"/>
</dbReference>
<dbReference type="FunFam" id="1.10.274.100:FF:000011">
    <property type="entry name" value="DNA-directed RNA polymerase subunit beta"/>
    <property type="match status" value="1"/>
</dbReference>
<dbReference type="Gene3D" id="1.10.132.30">
    <property type="match status" value="1"/>
</dbReference>
<dbReference type="Gene3D" id="1.10.150.390">
    <property type="match status" value="1"/>
</dbReference>
<dbReference type="Gene3D" id="1.10.1790.20">
    <property type="match status" value="1"/>
</dbReference>
<dbReference type="Gene3D" id="1.10.274.100">
    <property type="entry name" value="RNA polymerase Rpb1, domain 3"/>
    <property type="match status" value="1"/>
</dbReference>
<dbReference type="HAMAP" id="MF_01324">
    <property type="entry name" value="RNApol_bact_RpoC2"/>
    <property type="match status" value="1"/>
</dbReference>
<dbReference type="InterPro" id="IPR012756">
    <property type="entry name" value="DNA-dir_RpoC2_beta_pp"/>
</dbReference>
<dbReference type="InterPro" id="IPR050254">
    <property type="entry name" value="RNA_pol_beta''_euk"/>
</dbReference>
<dbReference type="InterPro" id="IPR042102">
    <property type="entry name" value="RNA_pol_Rpb1_3_sf"/>
</dbReference>
<dbReference type="InterPro" id="IPR007083">
    <property type="entry name" value="RNA_pol_Rpb1_4"/>
</dbReference>
<dbReference type="InterPro" id="IPR007081">
    <property type="entry name" value="RNA_pol_Rpb1_5"/>
</dbReference>
<dbReference type="InterPro" id="IPR038120">
    <property type="entry name" value="Rpb1_funnel_sf"/>
</dbReference>
<dbReference type="NCBIfam" id="TIGR02388">
    <property type="entry name" value="rpoC2_cyan"/>
    <property type="match status" value="1"/>
</dbReference>
<dbReference type="PANTHER" id="PTHR34995">
    <property type="entry name" value="DNA-DIRECTED RNA POLYMERASE SUBUNIT BETA"/>
    <property type="match status" value="1"/>
</dbReference>
<dbReference type="PANTHER" id="PTHR34995:SF1">
    <property type="entry name" value="DNA-DIRECTED RNA POLYMERASE SUBUNIT BETA"/>
    <property type="match status" value="1"/>
</dbReference>
<dbReference type="Pfam" id="PF05000">
    <property type="entry name" value="RNA_pol_Rpb1_4"/>
    <property type="match status" value="1"/>
</dbReference>
<dbReference type="Pfam" id="PF04998">
    <property type="entry name" value="RNA_pol_Rpb1_5"/>
    <property type="match status" value="2"/>
</dbReference>
<dbReference type="SUPFAM" id="SSF64484">
    <property type="entry name" value="beta and beta-prime subunits of DNA dependent RNA-polymerase"/>
    <property type="match status" value="1"/>
</dbReference>
<feature type="chain" id="PRO_0000353572" description="DNA-directed RNA polymerase subunit beta''">
    <location>
        <begin position="1"/>
        <end position="1379"/>
    </location>
</feature>
<feature type="binding site" evidence="1">
    <location>
        <position position="220"/>
    </location>
    <ligand>
        <name>Zn(2+)</name>
        <dbReference type="ChEBI" id="CHEBI:29105"/>
    </ligand>
</feature>
<feature type="binding site" evidence="1">
    <location>
        <position position="293"/>
    </location>
    <ligand>
        <name>Zn(2+)</name>
        <dbReference type="ChEBI" id="CHEBI:29105"/>
    </ligand>
</feature>
<feature type="binding site" evidence="1">
    <location>
        <position position="300"/>
    </location>
    <ligand>
        <name>Zn(2+)</name>
        <dbReference type="ChEBI" id="CHEBI:29105"/>
    </ligand>
</feature>
<feature type="binding site" evidence="1">
    <location>
        <position position="303"/>
    </location>
    <ligand>
        <name>Zn(2+)</name>
        <dbReference type="ChEBI" id="CHEBI:29105"/>
    </ligand>
</feature>
<name>RPOC2_NASOF</name>
<evidence type="ECO:0000255" key="1">
    <source>
        <dbReference type="HAMAP-Rule" id="MF_01324"/>
    </source>
</evidence>
<sequence length="1379" mass="156990">MAERANLVFHNKVIDGTAIKRLISRLIDHFGMAYTSHILDQVKTLGFQQATATSISLGIDDLLTIPSKGWLVQDAEQQSLILEKHHHYGNVHAVEKLRQSIEIWYATSEYLRQEMNPNFRMTDPFNPVHMMSFSGARGNASQVHQLVGMRGLMSDPQGQMIDLPIQSNLREGLSLTEYIISCYGARKGVVDTAVRTSDAGYLTRRLVEVVQHIVVRRTDCGTIRGISVSPRNKNRMMSERIFIQTLIGRVLADDIYIGSRCVAFRNQDLGIGLVNRLITFGTQSISIRTPFTCRSTSWICRLCYGRSPTHGDLVELGEAVGIIAGQSIGEPGTQLTLRTFHTGGVFTGGTAEHVRAPYNGKIKFNEDLVHPTRTRHGHPAFLCYIDLSVIIESEDIIHSVTIPPKSFLLVQNDQYVESEQVIAEIREGTYTFHFKERVRKYIYSDSEGEMHWSTDVSHAPEFTYSNVHLLPKTSHLWILSGGSCGSSLILFSIHKDQDQMNIPFLSVERKSISSFSVNNDQVSKKFVSSDFDDKKKSEIPHYSDLNGNLGTSHYNFIYSAIFHENSDLLAKRRRNRFIIPFQSIQEQEKKFIPHSGISIEIPINGIFRRNSIFAFFDDPRYRRKSSGILKYGTLKADSIIQKEDMIEYRGVQKFKTKYEMKVDRFFFIPEEVHILPESSAIMVQNYSIIGVDTRITLNIRSQVGGLIRVERKKKRIELKIFSGDIHFPDKADKISRHSGILIPPGRGKTNSKESKKLKNWIYVQRITPTKKKFFVLVRPVATYEIADSINLATLFPQDLFQEKDNIQLRVFNYILYGNGKPTRGISDTSIQLVRTCLVLNWDQENNNSSLEEIRAFFVEVSTKGLIRDFIRIGLVKSHISYIRKRNNPSDSGLISADHMNPFYSISPKAGILQQSLRQNHGTIRMFLNRNKESQSLLILSSSNCFRIGPFNHVKYHNVINQSIKKNPLITIKNSLGPLGTAIQISNFYSFLPLLTYNLISVIKYLQLDNLKYIFQVINSYLIDENGRIFNLDPYNNVVLNPFKLNWYFLHQNYHHNYCEETSTIISLGQFFCENVCIAKKEPHLKSGQVLIVQRDSVVIRSAKPYLATPGAKVHGHYREILYEGDTLVTFIYEKSRSGDITQGLPKVEQVLEVRSIDSISLNLEKRIKGWNKSITRILGIPWGFLIGAELTIVQSRISLVNKIQKVYRSQGVQIHNRHIEIIVRQITSKVLVSEEGMSNVFLPGELIGLLRAERTGRALEEAICYRAVLLGITRASLNTQSFISEASFQETARVLAKAALRGRIDWLKGLKENVVLGGVIPAGTGFNKGLVHCSRQHTNILLEKKTKNLSLFERDMRDILFYHREFCDSSISKSDFSRI</sequence>